<dbReference type="EC" id="7.4.2.8" evidence="1"/>
<dbReference type="EMBL" id="CP000472">
    <property type="protein sequence ID" value="ACJ28988.1"/>
    <property type="molecule type" value="Genomic_DNA"/>
</dbReference>
<dbReference type="RefSeq" id="WP_020912349.1">
    <property type="nucleotide sequence ID" value="NC_011566.1"/>
</dbReference>
<dbReference type="SMR" id="B8CNL9"/>
<dbReference type="STRING" id="225849.swp_2239"/>
<dbReference type="KEGG" id="swp:swp_2239"/>
<dbReference type="eggNOG" id="COG0653">
    <property type="taxonomic scope" value="Bacteria"/>
</dbReference>
<dbReference type="HOGENOM" id="CLU_005314_3_0_6"/>
<dbReference type="OrthoDB" id="9805579at2"/>
<dbReference type="Proteomes" id="UP000000753">
    <property type="component" value="Chromosome"/>
</dbReference>
<dbReference type="GO" id="GO:0031522">
    <property type="term" value="C:cell envelope Sec protein transport complex"/>
    <property type="evidence" value="ECO:0007669"/>
    <property type="project" value="TreeGrafter"/>
</dbReference>
<dbReference type="GO" id="GO:0005829">
    <property type="term" value="C:cytosol"/>
    <property type="evidence" value="ECO:0007669"/>
    <property type="project" value="TreeGrafter"/>
</dbReference>
<dbReference type="GO" id="GO:0005886">
    <property type="term" value="C:plasma membrane"/>
    <property type="evidence" value="ECO:0007669"/>
    <property type="project" value="UniProtKB-SubCell"/>
</dbReference>
<dbReference type="GO" id="GO:0005524">
    <property type="term" value="F:ATP binding"/>
    <property type="evidence" value="ECO:0007669"/>
    <property type="project" value="UniProtKB-UniRule"/>
</dbReference>
<dbReference type="GO" id="GO:0046872">
    <property type="term" value="F:metal ion binding"/>
    <property type="evidence" value="ECO:0007669"/>
    <property type="project" value="UniProtKB-KW"/>
</dbReference>
<dbReference type="GO" id="GO:0008564">
    <property type="term" value="F:protein-exporting ATPase activity"/>
    <property type="evidence" value="ECO:0007669"/>
    <property type="project" value="UniProtKB-EC"/>
</dbReference>
<dbReference type="GO" id="GO:0065002">
    <property type="term" value="P:intracellular protein transmembrane transport"/>
    <property type="evidence" value="ECO:0007669"/>
    <property type="project" value="UniProtKB-UniRule"/>
</dbReference>
<dbReference type="GO" id="GO:0017038">
    <property type="term" value="P:protein import"/>
    <property type="evidence" value="ECO:0007669"/>
    <property type="project" value="InterPro"/>
</dbReference>
<dbReference type="GO" id="GO:0006605">
    <property type="term" value="P:protein targeting"/>
    <property type="evidence" value="ECO:0007669"/>
    <property type="project" value="UniProtKB-UniRule"/>
</dbReference>
<dbReference type="GO" id="GO:0043952">
    <property type="term" value="P:protein transport by the Sec complex"/>
    <property type="evidence" value="ECO:0007669"/>
    <property type="project" value="TreeGrafter"/>
</dbReference>
<dbReference type="CDD" id="cd17928">
    <property type="entry name" value="DEXDc_SecA"/>
    <property type="match status" value="1"/>
</dbReference>
<dbReference type="CDD" id="cd18803">
    <property type="entry name" value="SF2_C_secA"/>
    <property type="match status" value="1"/>
</dbReference>
<dbReference type="FunFam" id="1.10.3060.10:FF:000001">
    <property type="entry name" value="Preprotein translocase subunit SecA"/>
    <property type="match status" value="1"/>
</dbReference>
<dbReference type="FunFam" id="3.40.50.300:FF:000113">
    <property type="entry name" value="Preprotein translocase subunit SecA"/>
    <property type="match status" value="1"/>
</dbReference>
<dbReference type="FunFam" id="3.90.1440.10:FF:000001">
    <property type="entry name" value="Preprotein translocase subunit SecA"/>
    <property type="match status" value="1"/>
</dbReference>
<dbReference type="Gene3D" id="1.10.3060.10">
    <property type="entry name" value="Helical scaffold and wing domains of SecA"/>
    <property type="match status" value="1"/>
</dbReference>
<dbReference type="Gene3D" id="3.40.50.300">
    <property type="entry name" value="P-loop containing nucleotide triphosphate hydrolases"/>
    <property type="match status" value="2"/>
</dbReference>
<dbReference type="Gene3D" id="3.90.1440.10">
    <property type="entry name" value="SecA, preprotein cross-linking domain"/>
    <property type="match status" value="1"/>
</dbReference>
<dbReference type="HAMAP" id="MF_01382">
    <property type="entry name" value="SecA"/>
    <property type="match status" value="1"/>
</dbReference>
<dbReference type="InterPro" id="IPR014001">
    <property type="entry name" value="Helicase_ATP-bd"/>
</dbReference>
<dbReference type="InterPro" id="IPR001650">
    <property type="entry name" value="Helicase_C-like"/>
</dbReference>
<dbReference type="InterPro" id="IPR027417">
    <property type="entry name" value="P-loop_NTPase"/>
</dbReference>
<dbReference type="InterPro" id="IPR004027">
    <property type="entry name" value="SEC_C_motif"/>
</dbReference>
<dbReference type="InterPro" id="IPR000185">
    <property type="entry name" value="SecA"/>
</dbReference>
<dbReference type="InterPro" id="IPR020937">
    <property type="entry name" value="SecA_CS"/>
</dbReference>
<dbReference type="InterPro" id="IPR011115">
    <property type="entry name" value="SecA_DEAD"/>
</dbReference>
<dbReference type="InterPro" id="IPR014018">
    <property type="entry name" value="SecA_motor_DEAD"/>
</dbReference>
<dbReference type="InterPro" id="IPR011130">
    <property type="entry name" value="SecA_preprotein_X-link_dom"/>
</dbReference>
<dbReference type="InterPro" id="IPR044722">
    <property type="entry name" value="SecA_SF2_C"/>
</dbReference>
<dbReference type="InterPro" id="IPR011116">
    <property type="entry name" value="SecA_Wing/Scaffold"/>
</dbReference>
<dbReference type="InterPro" id="IPR036266">
    <property type="entry name" value="SecA_Wing/Scaffold_sf"/>
</dbReference>
<dbReference type="InterPro" id="IPR036670">
    <property type="entry name" value="SecA_X-link_sf"/>
</dbReference>
<dbReference type="NCBIfam" id="NF006630">
    <property type="entry name" value="PRK09200.1"/>
    <property type="match status" value="1"/>
</dbReference>
<dbReference type="NCBIfam" id="NF009538">
    <property type="entry name" value="PRK12904.1"/>
    <property type="match status" value="1"/>
</dbReference>
<dbReference type="NCBIfam" id="TIGR00963">
    <property type="entry name" value="secA"/>
    <property type="match status" value="1"/>
</dbReference>
<dbReference type="PANTHER" id="PTHR30612:SF0">
    <property type="entry name" value="CHLOROPLAST PROTEIN-TRANSPORTING ATPASE"/>
    <property type="match status" value="1"/>
</dbReference>
<dbReference type="PANTHER" id="PTHR30612">
    <property type="entry name" value="SECA INNER MEMBRANE COMPONENT OF SEC PROTEIN SECRETION SYSTEM"/>
    <property type="match status" value="1"/>
</dbReference>
<dbReference type="Pfam" id="PF21090">
    <property type="entry name" value="P-loop_SecA"/>
    <property type="match status" value="1"/>
</dbReference>
<dbReference type="Pfam" id="PF02810">
    <property type="entry name" value="SEC-C"/>
    <property type="match status" value="1"/>
</dbReference>
<dbReference type="Pfam" id="PF07517">
    <property type="entry name" value="SecA_DEAD"/>
    <property type="match status" value="1"/>
</dbReference>
<dbReference type="Pfam" id="PF01043">
    <property type="entry name" value="SecA_PP_bind"/>
    <property type="match status" value="1"/>
</dbReference>
<dbReference type="Pfam" id="PF07516">
    <property type="entry name" value="SecA_SW"/>
    <property type="match status" value="1"/>
</dbReference>
<dbReference type="PRINTS" id="PR00906">
    <property type="entry name" value="SECA"/>
</dbReference>
<dbReference type="SMART" id="SM00957">
    <property type="entry name" value="SecA_DEAD"/>
    <property type="match status" value="1"/>
</dbReference>
<dbReference type="SMART" id="SM00958">
    <property type="entry name" value="SecA_PP_bind"/>
    <property type="match status" value="1"/>
</dbReference>
<dbReference type="SUPFAM" id="SSF81886">
    <property type="entry name" value="Helical scaffold and wing domains of SecA"/>
    <property type="match status" value="1"/>
</dbReference>
<dbReference type="SUPFAM" id="SSF52540">
    <property type="entry name" value="P-loop containing nucleoside triphosphate hydrolases"/>
    <property type="match status" value="2"/>
</dbReference>
<dbReference type="SUPFAM" id="SSF81767">
    <property type="entry name" value="Pre-protein crosslinking domain of SecA"/>
    <property type="match status" value="1"/>
</dbReference>
<dbReference type="PROSITE" id="PS01312">
    <property type="entry name" value="SECA"/>
    <property type="match status" value="1"/>
</dbReference>
<dbReference type="PROSITE" id="PS51196">
    <property type="entry name" value="SECA_MOTOR_DEAD"/>
    <property type="match status" value="1"/>
</dbReference>
<comment type="function">
    <text evidence="1">Part of the Sec protein translocase complex. Interacts with the SecYEG preprotein conducting channel. Has a central role in coupling the hydrolysis of ATP to the transfer of proteins into and across the cell membrane, serving both as a receptor for the preprotein-SecB complex and as an ATP-driven molecular motor driving the stepwise translocation of polypeptide chains across the membrane.</text>
</comment>
<comment type="catalytic activity">
    <reaction evidence="1">
        <text>ATP + H2O + cellular proteinSide 1 = ADP + phosphate + cellular proteinSide 2.</text>
        <dbReference type="EC" id="7.4.2.8"/>
    </reaction>
</comment>
<comment type="cofactor">
    <cofactor evidence="1">
        <name>Zn(2+)</name>
        <dbReference type="ChEBI" id="CHEBI:29105"/>
    </cofactor>
    <text evidence="1">May bind 1 zinc ion per subunit.</text>
</comment>
<comment type="subunit">
    <text evidence="1">Monomer and homodimer. Part of the essential Sec protein translocation apparatus which comprises SecA, SecYEG and auxiliary proteins SecDF-YajC and YidC.</text>
</comment>
<comment type="subcellular location">
    <subcellularLocation>
        <location evidence="1">Cell inner membrane</location>
        <topology evidence="1">Peripheral membrane protein</topology>
        <orientation evidence="1">Cytoplasmic side</orientation>
    </subcellularLocation>
    <subcellularLocation>
        <location evidence="1">Cytoplasm</location>
    </subcellularLocation>
    <text evidence="1">Distribution is 50-50.</text>
</comment>
<comment type="similarity">
    <text evidence="1">Belongs to the SecA family.</text>
</comment>
<reference key="1">
    <citation type="journal article" date="2008" name="PLoS ONE">
        <title>Environmental adaptation: genomic analysis of the piezotolerant and psychrotolerant deep-sea iron reducing bacterium Shewanella piezotolerans WP3.</title>
        <authorList>
            <person name="Wang F."/>
            <person name="Wang J."/>
            <person name="Jian H."/>
            <person name="Zhang B."/>
            <person name="Li S."/>
            <person name="Wang F."/>
            <person name="Zeng X."/>
            <person name="Gao L."/>
            <person name="Bartlett D.H."/>
            <person name="Yu J."/>
            <person name="Hu S."/>
            <person name="Xiao X."/>
        </authorList>
    </citation>
    <scope>NUCLEOTIDE SEQUENCE [LARGE SCALE GENOMIC DNA]</scope>
    <source>
        <strain>WP3 / JCM 13877</strain>
    </source>
</reference>
<feature type="chain" id="PRO_1000145061" description="Protein translocase subunit SecA">
    <location>
        <begin position="1"/>
        <end position="907"/>
    </location>
</feature>
<feature type="region of interest" description="Disordered" evidence="2">
    <location>
        <begin position="870"/>
        <end position="897"/>
    </location>
</feature>
<feature type="binding site" evidence="1">
    <location>
        <position position="87"/>
    </location>
    <ligand>
        <name>ATP</name>
        <dbReference type="ChEBI" id="CHEBI:30616"/>
    </ligand>
</feature>
<feature type="binding site" evidence="1">
    <location>
        <begin position="105"/>
        <end position="109"/>
    </location>
    <ligand>
        <name>ATP</name>
        <dbReference type="ChEBI" id="CHEBI:30616"/>
    </ligand>
</feature>
<feature type="binding site" evidence="1">
    <location>
        <position position="512"/>
    </location>
    <ligand>
        <name>ATP</name>
        <dbReference type="ChEBI" id="CHEBI:30616"/>
    </ligand>
</feature>
<feature type="binding site" evidence="1">
    <location>
        <position position="891"/>
    </location>
    <ligand>
        <name>Zn(2+)</name>
        <dbReference type="ChEBI" id="CHEBI:29105"/>
    </ligand>
</feature>
<feature type="binding site" evidence="1">
    <location>
        <position position="893"/>
    </location>
    <ligand>
        <name>Zn(2+)</name>
        <dbReference type="ChEBI" id="CHEBI:29105"/>
    </ligand>
</feature>
<feature type="binding site" evidence="1">
    <location>
        <position position="902"/>
    </location>
    <ligand>
        <name>Zn(2+)</name>
        <dbReference type="ChEBI" id="CHEBI:29105"/>
    </ligand>
</feature>
<feature type="binding site" evidence="1">
    <location>
        <position position="903"/>
    </location>
    <ligand>
        <name>Zn(2+)</name>
        <dbReference type="ChEBI" id="CHEBI:29105"/>
    </ligand>
</feature>
<proteinExistence type="inferred from homology"/>
<protein>
    <recommendedName>
        <fullName evidence="1">Protein translocase subunit SecA</fullName>
        <ecNumber evidence="1">7.4.2.8</ecNumber>
    </recommendedName>
</protein>
<gene>
    <name evidence="1" type="primary">secA</name>
    <name type="ordered locus">swp_2239</name>
</gene>
<name>SECA_SHEPW</name>
<evidence type="ECO:0000255" key="1">
    <source>
        <dbReference type="HAMAP-Rule" id="MF_01382"/>
    </source>
</evidence>
<evidence type="ECO:0000256" key="2">
    <source>
        <dbReference type="SAM" id="MobiDB-lite"/>
    </source>
</evidence>
<sequence>MFGKLLTKVFGSRNDRTLKAFGKVVNKINGFEEEYGQLSDEELKAKTKVFRERLEAGETLDDVLPEAFATVREASKRVFEMRHFDVQLIGGMILDSNRIAEMRTGEGKTLTATLPAYLNGLTGKGVHVITVNDYLAGRDAENNRPLFEFLGLSVGINVAGLGQVEKKAAYDADITYGTNNEFGFDYLRDNMAFSPAERVQRPLHYALIDEVDSILIDEARTPLIISGAAEDSSELYTKINTLIPNLIQQEKEDTEEEIGEGDYSIDEKAKQVHMTERGQEKVEVLLTERGMLAEGDSLYSAANISLLHHVNAALRAHTLFEKDVDYIVQDNEVIIVDEHTGRTMPGRRWSEGLHQAVEAKEGVHIQNENQTLASITFQNFFRQYEKLAGMTGTADTEAFEFQHIYGLDTVVVPTNRPMVRQDNPDLVYLTAEEKYAAIVKDIVGCRERGQPVLVGTVSIEQSELLHSLLKKEKIPHEILNAKFHEREADIVAQAGRTGAVTVATNMAGRGTDIVLGGNWNMEIEALANPTDEQRAKIKADWQIRHDEVVDAGGLHILGTERHESRRIDNQLRGRSGRQGDAGSSRFYLSMEDSLMRIFASDRVSSMMKKLGMEEGEAIEHPWVSRAIENAQRKVEARNFDIRKQLLEFDDVANDQRQVVYAQRNELMDAESIKDTITNIQTDVINELMDQYIPPQSVEELWDVAGLEQRLQQEYTMVLPIQEWLDKEDDLHEETLRERIVDTWINAYKAKEEMVGEQVLRQFEKAVMLQTLDGLWKEHLSAMDHLRQGIHLRGYAQKNPKQEYKRESFELFQQMLESLKHDVISILSKVQVQAQSDVEEMEERRRQEDAKIRRDYQHAAAEAIVGAEESAALAATQPQVREGEKVGRNDPCPCGSGKKYKQCHGKLS</sequence>
<organism>
    <name type="scientific">Shewanella piezotolerans (strain WP3 / JCM 13877)</name>
    <dbReference type="NCBI Taxonomy" id="225849"/>
    <lineage>
        <taxon>Bacteria</taxon>
        <taxon>Pseudomonadati</taxon>
        <taxon>Pseudomonadota</taxon>
        <taxon>Gammaproteobacteria</taxon>
        <taxon>Alteromonadales</taxon>
        <taxon>Shewanellaceae</taxon>
        <taxon>Shewanella</taxon>
    </lineage>
</organism>
<accession>B8CNL9</accession>
<keyword id="KW-0067">ATP-binding</keyword>
<keyword id="KW-0997">Cell inner membrane</keyword>
<keyword id="KW-1003">Cell membrane</keyword>
<keyword id="KW-0963">Cytoplasm</keyword>
<keyword id="KW-0472">Membrane</keyword>
<keyword id="KW-0479">Metal-binding</keyword>
<keyword id="KW-0547">Nucleotide-binding</keyword>
<keyword id="KW-0653">Protein transport</keyword>
<keyword id="KW-1278">Translocase</keyword>
<keyword id="KW-0811">Translocation</keyword>
<keyword id="KW-0813">Transport</keyword>
<keyword id="KW-0862">Zinc</keyword>